<proteinExistence type="inferred from homology"/>
<reference key="1">
    <citation type="journal article" date="2006" name="J. Bacteriol.">
        <title>Complete genome sequence of Yersinia pestis strains Antiqua and Nepal516: evidence of gene reduction in an emerging pathogen.</title>
        <authorList>
            <person name="Chain P.S.G."/>
            <person name="Hu P."/>
            <person name="Malfatti S.A."/>
            <person name="Radnedge L."/>
            <person name="Larimer F."/>
            <person name="Vergez L.M."/>
            <person name="Worsham P."/>
            <person name="Chu M.C."/>
            <person name="Andersen G.L."/>
        </authorList>
    </citation>
    <scope>NUCLEOTIDE SEQUENCE [LARGE SCALE GENOMIC DNA]</scope>
    <source>
        <strain>Nepal516</strain>
    </source>
</reference>
<reference key="2">
    <citation type="submission" date="2009-04" db="EMBL/GenBank/DDBJ databases">
        <title>Yersinia pestis Nepal516A whole genome shotgun sequencing project.</title>
        <authorList>
            <person name="Plunkett G. III"/>
            <person name="Anderson B.D."/>
            <person name="Baumler D.J."/>
            <person name="Burland V."/>
            <person name="Cabot E.L."/>
            <person name="Glasner J.D."/>
            <person name="Mau B."/>
            <person name="Neeno-Eckwall E."/>
            <person name="Perna N.T."/>
            <person name="Munk A.C."/>
            <person name="Tapia R."/>
            <person name="Green L.D."/>
            <person name="Rogers Y.C."/>
            <person name="Detter J.C."/>
            <person name="Bruce D.C."/>
            <person name="Brettin T.S."/>
        </authorList>
    </citation>
    <scope>NUCLEOTIDE SEQUENCE [LARGE SCALE GENOMIC DNA]</scope>
    <source>
        <strain>Nepal516</strain>
    </source>
</reference>
<evidence type="ECO:0000255" key="1">
    <source>
        <dbReference type="HAMAP-Rule" id="MF_00443"/>
    </source>
</evidence>
<comment type="function">
    <text evidence="1">Catalyzes the rearrangement of 1-deoxy-D-xylulose 5-phosphate (DXP) to produce the thiazole phosphate moiety of thiamine. Sulfur is provided by the thiocarboxylate moiety of the carrier protein ThiS. In vitro, sulfur can be provided by H(2)S.</text>
</comment>
<comment type="catalytic activity">
    <reaction evidence="1">
        <text>[ThiS sulfur-carrier protein]-C-terminal-Gly-aminoethanethioate + 2-iminoacetate + 1-deoxy-D-xylulose 5-phosphate = [ThiS sulfur-carrier protein]-C-terminal Gly-Gly + 2-[(2R,5Z)-2-carboxy-4-methylthiazol-5(2H)-ylidene]ethyl phosphate + 2 H2O + H(+)</text>
        <dbReference type="Rhea" id="RHEA:26297"/>
        <dbReference type="Rhea" id="RHEA-COMP:12909"/>
        <dbReference type="Rhea" id="RHEA-COMP:19908"/>
        <dbReference type="ChEBI" id="CHEBI:15377"/>
        <dbReference type="ChEBI" id="CHEBI:15378"/>
        <dbReference type="ChEBI" id="CHEBI:57792"/>
        <dbReference type="ChEBI" id="CHEBI:62899"/>
        <dbReference type="ChEBI" id="CHEBI:77846"/>
        <dbReference type="ChEBI" id="CHEBI:90778"/>
        <dbReference type="ChEBI" id="CHEBI:232372"/>
        <dbReference type="EC" id="2.8.1.10"/>
    </reaction>
</comment>
<comment type="pathway">
    <text evidence="1">Cofactor biosynthesis; thiamine diphosphate biosynthesis.</text>
</comment>
<comment type="subunit">
    <text evidence="1">Homotetramer. Forms heterodimers with either ThiH or ThiS.</text>
</comment>
<comment type="subcellular location">
    <subcellularLocation>
        <location evidence="1">Cytoplasm</location>
    </subcellularLocation>
</comment>
<comment type="similarity">
    <text evidence="1">Belongs to the ThiG family.</text>
</comment>
<organism>
    <name type="scientific">Yersinia pestis bv. Antiqua (strain Nepal516)</name>
    <dbReference type="NCBI Taxonomy" id="377628"/>
    <lineage>
        <taxon>Bacteria</taxon>
        <taxon>Pseudomonadati</taxon>
        <taxon>Pseudomonadota</taxon>
        <taxon>Gammaproteobacteria</taxon>
        <taxon>Enterobacterales</taxon>
        <taxon>Yersiniaceae</taxon>
        <taxon>Yersinia</taxon>
    </lineage>
</organism>
<name>THIG_YERPN</name>
<protein>
    <recommendedName>
        <fullName evidence="1">Thiazole synthase</fullName>
        <ecNumber evidence="1">2.8.1.10</ecNumber>
    </recommendedName>
</protein>
<keyword id="KW-0963">Cytoplasm</keyword>
<keyword id="KW-0704">Schiff base</keyword>
<keyword id="KW-0784">Thiamine biosynthesis</keyword>
<keyword id="KW-0808">Transferase</keyword>
<dbReference type="EC" id="2.8.1.10" evidence="1"/>
<dbReference type="EMBL" id="CP000305">
    <property type="protein sequence ID" value="ABG16556.1"/>
    <property type="molecule type" value="Genomic_DNA"/>
</dbReference>
<dbReference type="EMBL" id="ACNQ01000004">
    <property type="protein sequence ID" value="EEO78474.1"/>
    <property type="molecule type" value="Genomic_DNA"/>
</dbReference>
<dbReference type="RefSeq" id="WP_002228257.1">
    <property type="nucleotide sequence ID" value="NZ_ACNQ01000004.1"/>
</dbReference>
<dbReference type="SMR" id="Q1CN74"/>
<dbReference type="KEGG" id="ypn:YPN_0223"/>
<dbReference type="HOGENOM" id="CLU_062233_0_0_6"/>
<dbReference type="UniPathway" id="UPA00060"/>
<dbReference type="Proteomes" id="UP000008936">
    <property type="component" value="Chromosome"/>
</dbReference>
<dbReference type="GO" id="GO:0005737">
    <property type="term" value="C:cytoplasm"/>
    <property type="evidence" value="ECO:0007669"/>
    <property type="project" value="UniProtKB-SubCell"/>
</dbReference>
<dbReference type="GO" id="GO:1990107">
    <property type="term" value="F:thiazole synthase activity"/>
    <property type="evidence" value="ECO:0007669"/>
    <property type="project" value="UniProtKB-EC"/>
</dbReference>
<dbReference type="GO" id="GO:0009229">
    <property type="term" value="P:thiamine diphosphate biosynthetic process"/>
    <property type="evidence" value="ECO:0007669"/>
    <property type="project" value="UniProtKB-UniRule"/>
</dbReference>
<dbReference type="CDD" id="cd04728">
    <property type="entry name" value="ThiG"/>
    <property type="match status" value="1"/>
</dbReference>
<dbReference type="FunFam" id="3.20.20.70:FF:000049">
    <property type="entry name" value="Thiazole synthase"/>
    <property type="match status" value="1"/>
</dbReference>
<dbReference type="Gene3D" id="3.20.20.70">
    <property type="entry name" value="Aldolase class I"/>
    <property type="match status" value="1"/>
</dbReference>
<dbReference type="HAMAP" id="MF_00443">
    <property type="entry name" value="ThiG"/>
    <property type="match status" value="1"/>
</dbReference>
<dbReference type="InterPro" id="IPR013785">
    <property type="entry name" value="Aldolase_TIM"/>
</dbReference>
<dbReference type="InterPro" id="IPR033983">
    <property type="entry name" value="Thiazole_synthase_ThiG"/>
</dbReference>
<dbReference type="InterPro" id="IPR008867">
    <property type="entry name" value="ThiG"/>
</dbReference>
<dbReference type="PANTHER" id="PTHR34266">
    <property type="entry name" value="THIAZOLE SYNTHASE"/>
    <property type="match status" value="1"/>
</dbReference>
<dbReference type="PANTHER" id="PTHR34266:SF2">
    <property type="entry name" value="THIAZOLE SYNTHASE"/>
    <property type="match status" value="1"/>
</dbReference>
<dbReference type="Pfam" id="PF05690">
    <property type="entry name" value="ThiG"/>
    <property type="match status" value="1"/>
</dbReference>
<dbReference type="SUPFAM" id="SSF110399">
    <property type="entry name" value="ThiG-like"/>
    <property type="match status" value="1"/>
</dbReference>
<accession>Q1CN74</accession>
<accession>C4GNF0</accession>
<gene>
    <name evidence="1" type="primary">thiG</name>
    <name type="ordered locus">YPN_0223</name>
    <name type="ORF">YP516_0201</name>
</gene>
<feature type="chain" id="PRO_1000026058" description="Thiazole synthase">
    <location>
        <begin position="1"/>
        <end position="271"/>
    </location>
</feature>
<feature type="active site" description="Schiff-base intermediate with DXP" evidence="1">
    <location>
        <position position="95"/>
    </location>
</feature>
<feature type="binding site" evidence="1">
    <location>
        <position position="156"/>
    </location>
    <ligand>
        <name>1-deoxy-D-xylulose 5-phosphate</name>
        <dbReference type="ChEBI" id="CHEBI:57792"/>
    </ligand>
</feature>
<feature type="binding site" evidence="1">
    <location>
        <begin position="182"/>
        <end position="183"/>
    </location>
    <ligand>
        <name>1-deoxy-D-xylulose 5-phosphate</name>
        <dbReference type="ChEBI" id="CHEBI:57792"/>
    </ligand>
</feature>
<feature type="binding site" evidence="1">
    <location>
        <begin position="204"/>
        <end position="205"/>
    </location>
    <ligand>
        <name>1-deoxy-D-xylulose 5-phosphate</name>
        <dbReference type="ChEBI" id="CHEBI:57792"/>
    </ligand>
</feature>
<sequence length="271" mass="28887">MLKIADTTFTSRLFTGTGKFSSPELMLEALRASGSQLITMAMKRVDLQSGNDAILAPLRQLGVRLLPNTSGAKTAEEAIFAARLAREALNTHWVKLEIHPDVRYLLPDPIETLKAAEVLVKEGFVVLPYCGADPVLCKRLEEVGCAAVMPLGSPIGSNLGLRTRDFLQIIIEQSKVPVVVDAGIGAPSHALEALELGADAVLVNTAIAVAHSPVQMAHAFRLAVESGERARLAGLGASPFNPSQPDTLQLRATATSPLTGFLSQLEEQDHV</sequence>